<proteinExistence type="inferred from homology"/>
<evidence type="ECO:0000255" key="1">
    <source>
        <dbReference type="HAMAP-Rule" id="MF_00017"/>
    </source>
</evidence>
<comment type="function">
    <text evidence="1">May play a role in DNA repair. It seems to be involved in an RecBC-independent recombinational process of DNA repair. It may act with RecF and RecO.</text>
</comment>
<comment type="similarity">
    <text evidence="1">Belongs to the RecR family.</text>
</comment>
<organism>
    <name type="scientific">Citrobacter koseri (strain ATCC BAA-895 / CDC 4225-83 / SGSC4696)</name>
    <dbReference type="NCBI Taxonomy" id="290338"/>
    <lineage>
        <taxon>Bacteria</taxon>
        <taxon>Pseudomonadati</taxon>
        <taxon>Pseudomonadota</taxon>
        <taxon>Gammaproteobacteria</taxon>
        <taxon>Enterobacterales</taxon>
        <taxon>Enterobacteriaceae</taxon>
        <taxon>Citrobacter</taxon>
    </lineage>
</organism>
<keyword id="KW-0227">DNA damage</keyword>
<keyword id="KW-0233">DNA recombination</keyword>
<keyword id="KW-0234">DNA repair</keyword>
<keyword id="KW-0479">Metal-binding</keyword>
<keyword id="KW-1185">Reference proteome</keyword>
<keyword id="KW-0862">Zinc</keyword>
<keyword id="KW-0863">Zinc-finger</keyword>
<name>RECR_CITK8</name>
<feature type="chain" id="PRO_1000001526" description="Recombination protein RecR">
    <location>
        <begin position="1"/>
        <end position="201"/>
    </location>
</feature>
<feature type="domain" description="Toprim" evidence="1">
    <location>
        <begin position="81"/>
        <end position="176"/>
    </location>
</feature>
<feature type="zinc finger region" description="C4-type" evidence="1">
    <location>
        <begin position="57"/>
        <end position="72"/>
    </location>
</feature>
<accession>A8AJX1</accession>
<gene>
    <name evidence="1" type="primary">recR</name>
    <name type="ordered locus">CKO_02677</name>
</gene>
<reference key="1">
    <citation type="submission" date="2007-08" db="EMBL/GenBank/DDBJ databases">
        <authorList>
            <consortium name="The Citrobacter koseri Genome Sequencing Project"/>
            <person name="McClelland M."/>
            <person name="Sanderson E.K."/>
            <person name="Porwollik S."/>
            <person name="Spieth J."/>
            <person name="Clifton W.S."/>
            <person name="Latreille P."/>
            <person name="Courtney L."/>
            <person name="Wang C."/>
            <person name="Pepin K."/>
            <person name="Bhonagiri V."/>
            <person name="Nash W."/>
            <person name="Johnson M."/>
            <person name="Thiruvilangam P."/>
            <person name="Wilson R."/>
        </authorList>
    </citation>
    <scope>NUCLEOTIDE SEQUENCE [LARGE SCALE GENOMIC DNA]</scope>
    <source>
        <strain>ATCC BAA-895 / CDC 4225-83 / SGSC4696</strain>
    </source>
</reference>
<dbReference type="EMBL" id="CP000822">
    <property type="protein sequence ID" value="ABV13784.1"/>
    <property type="molecule type" value="Genomic_DNA"/>
</dbReference>
<dbReference type="RefSeq" id="WP_012133502.1">
    <property type="nucleotide sequence ID" value="NC_009792.1"/>
</dbReference>
<dbReference type="SMR" id="A8AJX1"/>
<dbReference type="STRING" id="290338.CKO_02677"/>
<dbReference type="GeneID" id="45136536"/>
<dbReference type="KEGG" id="cko:CKO_02677"/>
<dbReference type="HOGENOM" id="CLU_060739_1_2_6"/>
<dbReference type="OrthoDB" id="9802672at2"/>
<dbReference type="Proteomes" id="UP000008148">
    <property type="component" value="Chromosome"/>
</dbReference>
<dbReference type="GO" id="GO:0003677">
    <property type="term" value="F:DNA binding"/>
    <property type="evidence" value="ECO:0007669"/>
    <property type="project" value="UniProtKB-UniRule"/>
</dbReference>
<dbReference type="GO" id="GO:0008270">
    <property type="term" value="F:zinc ion binding"/>
    <property type="evidence" value="ECO:0007669"/>
    <property type="project" value="UniProtKB-KW"/>
</dbReference>
<dbReference type="GO" id="GO:0006310">
    <property type="term" value="P:DNA recombination"/>
    <property type="evidence" value="ECO:0007669"/>
    <property type="project" value="UniProtKB-UniRule"/>
</dbReference>
<dbReference type="GO" id="GO:0006281">
    <property type="term" value="P:DNA repair"/>
    <property type="evidence" value="ECO:0007669"/>
    <property type="project" value="UniProtKB-UniRule"/>
</dbReference>
<dbReference type="CDD" id="cd01025">
    <property type="entry name" value="TOPRIM_recR"/>
    <property type="match status" value="1"/>
</dbReference>
<dbReference type="FunFam" id="1.10.8.420:FF:000001">
    <property type="entry name" value="Recombination protein RecR"/>
    <property type="match status" value="1"/>
</dbReference>
<dbReference type="FunFam" id="3.40.1360.10:FF:000001">
    <property type="entry name" value="Recombination protein RecR"/>
    <property type="match status" value="1"/>
</dbReference>
<dbReference type="Gene3D" id="3.40.1360.10">
    <property type="match status" value="1"/>
</dbReference>
<dbReference type="Gene3D" id="6.10.250.240">
    <property type="match status" value="1"/>
</dbReference>
<dbReference type="Gene3D" id="1.10.8.420">
    <property type="entry name" value="RecR Domain 1"/>
    <property type="match status" value="1"/>
</dbReference>
<dbReference type="HAMAP" id="MF_00017">
    <property type="entry name" value="RecR"/>
    <property type="match status" value="1"/>
</dbReference>
<dbReference type="InterPro" id="IPR000093">
    <property type="entry name" value="DNA_Rcmb_RecR"/>
</dbReference>
<dbReference type="InterPro" id="IPR023627">
    <property type="entry name" value="Rcmb_RecR"/>
</dbReference>
<dbReference type="InterPro" id="IPR015967">
    <property type="entry name" value="Rcmb_RecR_Znf"/>
</dbReference>
<dbReference type="InterPro" id="IPR006171">
    <property type="entry name" value="TOPRIM_dom"/>
</dbReference>
<dbReference type="InterPro" id="IPR034137">
    <property type="entry name" value="TOPRIM_RecR"/>
</dbReference>
<dbReference type="NCBIfam" id="TIGR00615">
    <property type="entry name" value="recR"/>
    <property type="match status" value="1"/>
</dbReference>
<dbReference type="PANTHER" id="PTHR30446">
    <property type="entry name" value="RECOMBINATION PROTEIN RECR"/>
    <property type="match status" value="1"/>
</dbReference>
<dbReference type="PANTHER" id="PTHR30446:SF0">
    <property type="entry name" value="RECOMBINATION PROTEIN RECR"/>
    <property type="match status" value="1"/>
</dbReference>
<dbReference type="Pfam" id="PF21175">
    <property type="entry name" value="RecR_C"/>
    <property type="match status" value="1"/>
</dbReference>
<dbReference type="Pfam" id="PF21176">
    <property type="entry name" value="RecR_HhH"/>
    <property type="match status" value="1"/>
</dbReference>
<dbReference type="Pfam" id="PF02132">
    <property type="entry name" value="RecR_ZnF"/>
    <property type="match status" value="1"/>
</dbReference>
<dbReference type="Pfam" id="PF13662">
    <property type="entry name" value="Toprim_4"/>
    <property type="match status" value="1"/>
</dbReference>
<dbReference type="SMART" id="SM00493">
    <property type="entry name" value="TOPRIM"/>
    <property type="match status" value="1"/>
</dbReference>
<dbReference type="SUPFAM" id="SSF111304">
    <property type="entry name" value="Recombination protein RecR"/>
    <property type="match status" value="1"/>
</dbReference>
<dbReference type="PROSITE" id="PS01300">
    <property type="entry name" value="RECR"/>
    <property type="match status" value="1"/>
</dbReference>
<dbReference type="PROSITE" id="PS50880">
    <property type="entry name" value="TOPRIM"/>
    <property type="match status" value="1"/>
</dbReference>
<sequence>MQTSPLLTQLMEALRCLPGVGPKSAQRMAFTLLQRDRSGGMRLAQALTRAMSEIGHCADCRTFTEQDVCNICSNPRRQENGQICVVESPADIYAIEQTGQFSGRYFVLMGHLSPLDGIGPDDIGLDRLEQRLASEQLSEVILATNPTVEGEATANYIAELCAQYGVEASRIAHGVPVGGELEMVDGTTLSHSLAGRHKIRF</sequence>
<protein>
    <recommendedName>
        <fullName evidence="1">Recombination protein RecR</fullName>
    </recommendedName>
</protein>